<sequence length="187" mass="20206">MNETQIQRETRQVVEDVLEKTNLKQGALFVLGLSSSEVLGGQIGKESSQEIGELIVETILGILGSRGIHLAVQGCEHVNRALVVERQVAEQFGLEIVSVHPTLHAGGSGQLAAFKFMQDPVEVEFIKAHAGLDIGDTAIGMHVKHVQVPIRPILREIGHAHVTALASRPKLIGGARAHYPQDAIRKT</sequence>
<name>Y612_STRZJ</name>
<gene>
    <name type="ordered locus">SPJ_0612</name>
</gene>
<feature type="chain" id="PRO_1000148529" description="UPF0340 protein SPJ_0612">
    <location>
        <begin position="1"/>
        <end position="187"/>
    </location>
</feature>
<proteinExistence type="inferred from homology"/>
<accession>C1CD30</accession>
<protein>
    <recommendedName>
        <fullName evidence="1">UPF0340 protein SPJ_0612</fullName>
    </recommendedName>
</protein>
<evidence type="ECO:0000255" key="1">
    <source>
        <dbReference type="HAMAP-Rule" id="MF_00800"/>
    </source>
</evidence>
<organism>
    <name type="scientific">Streptococcus pneumoniae (strain JJA)</name>
    <dbReference type="NCBI Taxonomy" id="488222"/>
    <lineage>
        <taxon>Bacteria</taxon>
        <taxon>Bacillati</taxon>
        <taxon>Bacillota</taxon>
        <taxon>Bacilli</taxon>
        <taxon>Lactobacillales</taxon>
        <taxon>Streptococcaceae</taxon>
        <taxon>Streptococcus</taxon>
    </lineage>
</organism>
<reference key="1">
    <citation type="journal article" date="2010" name="Genome Biol.">
        <title>Structure and dynamics of the pan-genome of Streptococcus pneumoniae and closely related species.</title>
        <authorList>
            <person name="Donati C."/>
            <person name="Hiller N.L."/>
            <person name="Tettelin H."/>
            <person name="Muzzi A."/>
            <person name="Croucher N.J."/>
            <person name="Angiuoli S.V."/>
            <person name="Oggioni M."/>
            <person name="Dunning Hotopp J.C."/>
            <person name="Hu F.Z."/>
            <person name="Riley D.R."/>
            <person name="Covacci A."/>
            <person name="Mitchell T.J."/>
            <person name="Bentley S.D."/>
            <person name="Kilian M."/>
            <person name="Ehrlich G.D."/>
            <person name="Rappuoli R."/>
            <person name="Moxon E.R."/>
            <person name="Masignani V."/>
        </authorList>
    </citation>
    <scope>NUCLEOTIDE SEQUENCE [LARGE SCALE GENOMIC DNA]</scope>
    <source>
        <strain>JJA</strain>
    </source>
</reference>
<comment type="similarity">
    <text evidence="1">Belongs to the UPF0340 family.</text>
</comment>
<dbReference type="EMBL" id="CP000919">
    <property type="protein sequence ID" value="ACO18882.1"/>
    <property type="molecule type" value="Genomic_DNA"/>
</dbReference>
<dbReference type="RefSeq" id="WP_001006372.1">
    <property type="nucleotide sequence ID" value="NC_012466.1"/>
</dbReference>
<dbReference type="SMR" id="C1CD30"/>
<dbReference type="KEGG" id="sjj:SPJ_0612"/>
<dbReference type="HOGENOM" id="CLU_106658_0_0_9"/>
<dbReference type="Proteomes" id="UP000002206">
    <property type="component" value="Chromosome"/>
</dbReference>
<dbReference type="Gene3D" id="3.40.50.10360">
    <property type="entry name" value="Hypothetical protein TT1679"/>
    <property type="match status" value="1"/>
</dbReference>
<dbReference type="HAMAP" id="MF_00800">
    <property type="entry name" value="UPF0340"/>
    <property type="match status" value="1"/>
</dbReference>
<dbReference type="InterPro" id="IPR028345">
    <property type="entry name" value="Antibiotic_NAT-like"/>
</dbReference>
<dbReference type="InterPro" id="IPR006340">
    <property type="entry name" value="DUF436"/>
</dbReference>
<dbReference type="NCBIfam" id="TIGR01440">
    <property type="entry name" value="TIGR01440 family protein"/>
    <property type="match status" value="1"/>
</dbReference>
<dbReference type="Pfam" id="PF04260">
    <property type="entry name" value="DUF436"/>
    <property type="match status" value="1"/>
</dbReference>
<dbReference type="PIRSF" id="PIRSF007510">
    <property type="entry name" value="UCP007510"/>
    <property type="match status" value="1"/>
</dbReference>
<dbReference type="SUPFAM" id="SSF110710">
    <property type="entry name" value="TTHA0583/YokD-like"/>
    <property type="match status" value="1"/>
</dbReference>